<proteinExistence type="inferred from homology"/>
<keyword id="KW-0997">Cell inner membrane</keyword>
<keyword id="KW-1003">Cell membrane</keyword>
<keyword id="KW-0201">Cytochrome c-type biogenesis</keyword>
<keyword id="KW-0349">Heme</keyword>
<keyword id="KW-0408">Iron</keyword>
<keyword id="KW-0472">Membrane</keyword>
<keyword id="KW-0479">Metal-binding</keyword>
<keyword id="KW-1185">Reference proteome</keyword>
<keyword id="KW-0735">Signal-anchor</keyword>
<keyword id="KW-0812">Transmembrane</keyword>
<keyword id="KW-1133">Transmembrane helix</keyword>
<gene>
    <name evidence="1" type="primary">ccmE</name>
    <name evidence="1" type="synonym">cycJ</name>
    <name type="ordered locus">Acry_2853</name>
</gene>
<accession>A5G2G1</accession>
<dbReference type="EMBL" id="CP000697">
    <property type="protein sequence ID" value="ABQ32043.1"/>
    <property type="molecule type" value="Genomic_DNA"/>
</dbReference>
<dbReference type="SMR" id="A5G2G1"/>
<dbReference type="STRING" id="349163.Acry_2853"/>
<dbReference type="KEGG" id="acr:Acry_2853"/>
<dbReference type="eggNOG" id="COG2332">
    <property type="taxonomic scope" value="Bacteria"/>
</dbReference>
<dbReference type="HOGENOM" id="CLU_079503_1_1_5"/>
<dbReference type="Proteomes" id="UP000000245">
    <property type="component" value="Chromosome"/>
</dbReference>
<dbReference type="GO" id="GO:0005886">
    <property type="term" value="C:plasma membrane"/>
    <property type="evidence" value="ECO:0007669"/>
    <property type="project" value="UniProtKB-SubCell"/>
</dbReference>
<dbReference type="GO" id="GO:0020037">
    <property type="term" value="F:heme binding"/>
    <property type="evidence" value="ECO:0007669"/>
    <property type="project" value="InterPro"/>
</dbReference>
<dbReference type="GO" id="GO:0046872">
    <property type="term" value="F:metal ion binding"/>
    <property type="evidence" value="ECO:0007669"/>
    <property type="project" value="UniProtKB-KW"/>
</dbReference>
<dbReference type="GO" id="GO:0017004">
    <property type="term" value="P:cytochrome complex assembly"/>
    <property type="evidence" value="ECO:0007669"/>
    <property type="project" value="UniProtKB-KW"/>
</dbReference>
<dbReference type="Gene3D" id="2.40.50.140">
    <property type="entry name" value="Nucleic acid-binding proteins"/>
    <property type="match status" value="1"/>
</dbReference>
<dbReference type="HAMAP" id="MF_01959">
    <property type="entry name" value="CcmE"/>
    <property type="match status" value="1"/>
</dbReference>
<dbReference type="InterPro" id="IPR004329">
    <property type="entry name" value="CcmE"/>
</dbReference>
<dbReference type="InterPro" id="IPR036127">
    <property type="entry name" value="CcmE-like_sf"/>
</dbReference>
<dbReference type="InterPro" id="IPR012340">
    <property type="entry name" value="NA-bd_OB-fold"/>
</dbReference>
<dbReference type="NCBIfam" id="NF009731">
    <property type="entry name" value="PRK13254.1-5"/>
    <property type="match status" value="1"/>
</dbReference>
<dbReference type="PANTHER" id="PTHR34128">
    <property type="entry name" value="CYTOCHROME C-TYPE BIOGENESIS PROTEIN CCME HOMOLOG, MITOCHONDRIAL"/>
    <property type="match status" value="1"/>
</dbReference>
<dbReference type="PANTHER" id="PTHR34128:SF2">
    <property type="entry name" value="CYTOCHROME C-TYPE BIOGENESIS PROTEIN CCME HOMOLOG, MITOCHONDRIAL"/>
    <property type="match status" value="1"/>
</dbReference>
<dbReference type="Pfam" id="PF03100">
    <property type="entry name" value="CcmE"/>
    <property type="match status" value="1"/>
</dbReference>
<dbReference type="SUPFAM" id="SSF82093">
    <property type="entry name" value="Heme chaperone CcmE"/>
    <property type="match status" value="1"/>
</dbReference>
<name>CCME_ACICJ</name>
<protein>
    <recommendedName>
        <fullName evidence="1">Cytochrome c-type biogenesis protein CcmE</fullName>
    </recommendedName>
    <alternativeName>
        <fullName evidence="1">Cytochrome c maturation protein E</fullName>
    </alternativeName>
    <alternativeName>
        <fullName evidence="1">Heme chaperone CcmE</fullName>
    </alternativeName>
</protein>
<sequence>MMSRKKRRLWIVIACGIGLSTAVALMLFAFRSSLSFFMSPEQVAARHPPPGRVFRLGGIVQANTVVMGTRNGAPYTTFRITDGRASIPVVYTGVLPGLFRQGQGVVTIGAMAKGDSEFMASTVLAKHGADYMPRDVEMALRKAGKWNPKFGPPPNAGAWDDKSPAQIEASNNG</sequence>
<organism>
    <name type="scientific">Acidiphilium cryptum (strain JF-5)</name>
    <dbReference type="NCBI Taxonomy" id="349163"/>
    <lineage>
        <taxon>Bacteria</taxon>
        <taxon>Pseudomonadati</taxon>
        <taxon>Pseudomonadota</taxon>
        <taxon>Alphaproteobacteria</taxon>
        <taxon>Acetobacterales</taxon>
        <taxon>Acidocellaceae</taxon>
        <taxon>Acidiphilium</taxon>
    </lineage>
</organism>
<evidence type="ECO:0000255" key="1">
    <source>
        <dbReference type="HAMAP-Rule" id="MF_01959"/>
    </source>
</evidence>
<evidence type="ECO:0000256" key="2">
    <source>
        <dbReference type="SAM" id="MobiDB-lite"/>
    </source>
</evidence>
<comment type="function">
    <text evidence="1">Heme chaperone required for the biogenesis of c-type cytochromes. Transiently binds heme delivered by CcmC and transfers the heme to apo-cytochromes in a process facilitated by CcmF and CcmH.</text>
</comment>
<comment type="subcellular location">
    <subcellularLocation>
        <location evidence="1">Cell inner membrane</location>
        <topology evidence="1">Single-pass type II membrane protein</topology>
        <orientation evidence="1">Periplasmic side</orientation>
    </subcellularLocation>
</comment>
<comment type="similarity">
    <text evidence="1">Belongs to the CcmE/CycJ family.</text>
</comment>
<reference key="1">
    <citation type="submission" date="2007-05" db="EMBL/GenBank/DDBJ databases">
        <title>Complete sequence of chromosome of Acidiphilium cryptum JF-5.</title>
        <authorList>
            <consortium name="US DOE Joint Genome Institute"/>
            <person name="Copeland A."/>
            <person name="Lucas S."/>
            <person name="Lapidus A."/>
            <person name="Barry K."/>
            <person name="Detter J.C."/>
            <person name="Glavina del Rio T."/>
            <person name="Hammon N."/>
            <person name="Israni S."/>
            <person name="Dalin E."/>
            <person name="Tice H."/>
            <person name="Pitluck S."/>
            <person name="Sims D."/>
            <person name="Brettin T."/>
            <person name="Bruce D."/>
            <person name="Han C."/>
            <person name="Schmutz J."/>
            <person name="Larimer F."/>
            <person name="Land M."/>
            <person name="Hauser L."/>
            <person name="Kyrpides N."/>
            <person name="Kim E."/>
            <person name="Magnuson T."/>
            <person name="Richardson P."/>
        </authorList>
    </citation>
    <scope>NUCLEOTIDE SEQUENCE [LARGE SCALE GENOMIC DNA]</scope>
    <source>
        <strain>JF-5</strain>
    </source>
</reference>
<feature type="chain" id="PRO_1000070799" description="Cytochrome c-type biogenesis protein CcmE">
    <location>
        <begin position="1"/>
        <end position="173"/>
    </location>
</feature>
<feature type="topological domain" description="Cytoplasmic" evidence="1">
    <location>
        <begin position="1"/>
        <end position="8"/>
    </location>
</feature>
<feature type="transmembrane region" description="Helical; Signal-anchor for type II membrane protein" evidence="1">
    <location>
        <begin position="9"/>
        <end position="29"/>
    </location>
</feature>
<feature type="topological domain" description="Periplasmic" evidence="1">
    <location>
        <begin position="30"/>
        <end position="173"/>
    </location>
</feature>
<feature type="region of interest" description="Disordered" evidence="2">
    <location>
        <begin position="145"/>
        <end position="173"/>
    </location>
</feature>
<feature type="binding site" description="covalent" evidence="1">
    <location>
        <position position="127"/>
    </location>
    <ligand>
        <name>heme</name>
        <dbReference type="ChEBI" id="CHEBI:30413"/>
    </ligand>
</feature>
<feature type="binding site" description="axial binding residue" evidence="1">
    <location>
        <position position="131"/>
    </location>
    <ligand>
        <name>heme</name>
        <dbReference type="ChEBI" id="CHEBI:30413"/>
    </ligand>
    <ligandPart>
        <name>Fe</name>
        <dbReference type="ChEBI" id="CHEBI:18248"/>
    </ligandPart>
</feature>